<feature type="signal peptide" evidence="2">
    <location>
        <begin position="1"/>
        <end position="16"/>
    </location>
</feature>
<feature type="chain" id="PRO_0000433773" description="U-actitoxin-Avd3q">
    <location>
        <begin position="17"/>
        <end position="75"/>
    </location>
</feature>
<feature type="propeptide" id="PRO_0000433774" evidence="2">
    <location>
        <begin position="76"/>
        <end position="82"/>
    </location>
</feature>
<feature type="domain" description="BPTI/Kunitz inhibitor" evidence="4">
    <location>
        <begin position="21"/>
        <end position="71"/>
    </location>
</feature>
<feature type="site" description="Reactive bond" evidence="1">
    <location>
        <begin position="31"/>
        <end position="32"/>
    </location>
</feature>
<feature type="disulfide bond" evidence="4">
    <location>
        <begin position="21"/>
        <end position="71"/>
    </location>
</feature>
<feature type="disulfide bond" evidence="4">
    <location>
        <begin position="30"/>
        <end position="54"/>
    </location>
</feature>
<feature type="disulfide bond" evidence="4">
    <location>
        <begin position="46"/>
        <end position="67"/>
    </location>
</feature>
<accession>P0DN18</accession>
<reference key="1">
    <citation type="journal article" date="2009" name="BMC Genomics">
        <title>Comprehensive EST analysis of the symbiotic sea anemone, Anemonia viridis.</title>
        <authorList>
            <person name="Sabourault C."/>
            <person name="Ganot P."/>
            <person name="Deleury E."/>
            <person name="Allemand D."/>
            <person name="Furla P."/>
        </authorList>
    </citation>
    <scope>NUCLEOTIDE SEQUENCE [MRNA]</scope>
</reference>
<reference key="2">
    <citation type="journal article" date="2011" name="BMC Genomics">
        <title>The mining of toxin-like polypeptides from EST database by single residue distribution analysis.</title>
        <authorList>
            <person name="Kozlov S."/>
            <person name="Grishin E."/>
        </authorList>
    </citation>
    <scope>NOMENCLATURE</scope>
</reference>
<reference key="3">
    <citation type="journal article" date="2012" name="Toxicon">
        <title>Development of a rational nomenclature for naming peptide and protein toxins from sea anemones.</title>
        <authorList>
            <person name="Oliveira J.S."/>
            <person name="Fuentes-Silva D."/>
            <person name="King G.F."/>
        </authorList>
    </citation>
    <scope>NOMENCLATURE</scope>
</reference>
<dbReference type="EMBL" id="FK758844">
    <property type="status" value="NOT_ANNOTATED_CDS"/>
    <property type="molecule type" value="mRNA"/>
</dbReference>
<dbReference type="SMR" id="P0DN18"/>
<dbReference type="GO" id="GO:0005576">
    <property type="term" value="C:extracellular region"/>
    <property type="evidence" value="ECO:0007669"/>
    <property type="project" value="UniProtKB-SubCell"/>
</dbReference>
<dbReference type="GO" id="GO:0042151">
    <property type="term" value="C:nematocyst"/>
    <property type="evidence" value="ECO:0007669"/>
    <property type="project" value="UniProtKB-SubCell"/>
</dbReference>
<dbReference type="GO" id="GO:0015459">
    <property type="term" value="F:potassium channel regulator activity"/>
    <property type="evidence" value="ECO:0007669"/>
    <property type="project" value="UniProtKB-KW"/>
</dbReference>
<dbReference type="GO" id="GO:0004867">
    <property type="term" value="F:serine-type endopeptidase inhibitor activity"/>
    <property type="evidence" value="ECO:0007669"/>
    <property type="project" value="UniProtKB-KW"/>
</dbReference>
<dbReference type="GO" id="GO:0090729">
    <property type="term" value="F:toxin activity"/>
    <property type="evidence" value="ECO:0007669"/>
    <property type="project" value="UniProtKB-KW"/>
</dbReference>
<dbReference type="CDD" id="cd22633">
    <property type="entry name" value="Kunitz_actitoxin-like"/>
    <property type="match status" value="1"/>
</dbReference>
<dbReference type="FunFam" id="4.10.410.10:FF:000021">
    <property type="entry name" value="Serine protease inhibitor, putative"/>
    <property type="match status" value="1"/>
</dbReference>
<dbReference type="Gene3D" id="4.10.410.10">
    <property type="entry name" value="Pancreatic trypsin inhibitor Kunitz domain"/>
    <property type="match status" value="1"/>
</dbReference>
<dbReference type="InterPro" id="IPR002223">
    <property type="entry name" value="Kunitz_BPTI"/>
</dbReference>
<dbReference type="InterPro" id="IPR036880">
    <property type="entry name" value="Kunitz_BPTI_sf"/>
</dbReference>
<dbReference type="InterPro" id="IPR020901">
    <property type="entry name" value="Prtase_inh_Kunz-CS"/>
</dbReference>
<dbReference type="InterPro" id="IPR050098">
    <property type="entry name" value="TFPI/VKTCI-like"/>
</dbReference>
<dbReference type="PANTHER" id="PTHR10083:SF374">
    <property type="entry name" value="BPTI_KUNITZ INHIBITOR DOMAIN-CONTAINING PROTEIN"/>
    <property type="match status" value="1"/>
</dbReference>
<dbReference type="PANTHER" id="PTHR10083">
    <property type="entry name" value="KUNITZ-TYPE PROTEASE INHIBITOR-RELATED"/>
    <property type="match status" value="1"/>
</dbReference>
<dbReference type="Pfam" id="PF00014">
    <property type="entry name" value="Kunitz_BPTI"/>
    <property type="match status" value="1"/>
</dbReference>
<dbReference type="PRINTS" id="PR00759">
    <property type="entry name" value="BASICPTASE"/>
</dbReference>
<dbReference type="SMART" id="SM00131">
    <property type="entry name" value="KU"/>
    <property type="match status" value="1"/>
</dbReference>
<dbReference type="SUPFAM" id="SSF57362">
    <property type="entry name" value="BPTI-like"/>
    <property type="match status" value="1"/>
</dbReference>
<dbReference type="PROSITE" id="PS00280">
    <property type="entry name" value="BPTI_KUNITZ_1"/>
    <property type="match status" value="1"/>
</dbReference>
<dbReference type="PROSITE" id="PS50279">
    <property type="entry name" value="BPTI_KUNITZ_2"/>
    <property type="match status" value="1"/>
</dbReference>
<evidence type="ECO:0000250" key="1"/>
<evidence type="ECO:0000250" key="2">
    <source>
        <dbReference type="UniProtKB" id="P10280"/>
    </source>
</evidence>
<evidence type="ECO:0000250" key="3">
    <source>
        <dbReference type="UniProtKB" id="Q9TWF8"/>
    </source>
</evidence>
<evidence type="ECO:0000255" key="4">
    <source>
        <dbReference type="PROSITE-ProRule" id="PRU00031"/>
    </source>
</evidence>
<evidence type="ECO:0000303" key="5">
    <source>
    </source>
</evidence>
<evidence type="ECO:0000303" key="6">
    <source>
    </source>
</evidence>
<evidence type="ECO:0000305" key="7"/>
<keyword id="KW-1015">Disulfide bond</keyword>
<keyword id="KW-0872">Ion channel impairing toxin</keyword>
<keyword id="KW-0166">Nematocyst</keyword>
<keyword id="KW-0632">Potassium channel impairing toxin</keyword>
<keyword id="KW-0646">Protease inhibitor</keyword>
<keyword id="KW-0964">Secreted</keyword>
<keyword id="KW-0722">Serine protease inhibitor</keyword>
<keyword id="KW-0732">Signal</keyword>
<keyword id="KW-0800">Toxin</keyword>
<keyword id="KW-1220">Voltage-gated potassium channel impairing toxin</keyword>
<proteinExistence type="inferred from homology"/>
<sequence length="82" mass="9303">MVFLLCFFLVADVSYGINGDCELPKVVGFCRARLPRYYYNSSSRRCEKFNYGGCGGNANNFHTLEECEKVCGVRSRDSPKEN</sequence>
<comment type="function">
    <text evidence="2 3">Serine protease inhibitor that inhibits both tissue and plasma kallikreins. Has hemolytic activity. Inhibits voltage-gated potassium channels (Kv).</text>
</comment>
<comment type="subcellular location">
    <subcellularLocation>
        <location evidence="7">Secreted</location>
    </subcellularLocation>
    <subcellularLocation>
        <location evidence="7">Nematocyst</location>
    </subcellularLocation>
</comment>
<comment type="similarity">
    <text evidence="7">Belongs to the venom Kunitz-type family. Sea anemone type 2 potassium channel toxin subfamily.</text>
</comment>
<comment type="caution">
    <text evidence="7">Opinions are divided on whether Anemonia viridis (Forsskal, 1775) and Anemonia sulcata (Pennant, 1777) are separate species.</text>
</comment>
<protein>
    <recommendedName>
        <fullName evidence="6">U-actitoxin-Avd3q</fullName>
        <shortName evidence="6">U-AITX-Avd3q</shortName>
    </recommendedName>
    <alternativeName>
        <fullName evidence="5">AsKC14</fullName>
    </alternativeName>
</protein>
<name>VKTE_ANEVI</name>
<organism>
    <name type="scientific">Anemonia viridis</name>
    <name type="common">Snakelocks anemone</name>
    <dbReference type="NCBI Taxonomy" id="51769"/>
    <lineage>
        <taxon>Eukaryota</taxon>
        <taxon>Metazoa</taxon>
        <taxon>Cnidaria</taxon>
        <taxon>Anthozoa</taxon>
        <taxon>Hexacorallia</taxon>
        <taxon>Actiniaria</taxon>
        <taxon>Actiniidae</taxon>
        <taxon>Anemonia</taxon>
    </lineage>
</organism>